<comment type="function">
    <text evidence="1">Catalyzes the formation of acetyl phosphate from acetate and ATP. Can also catalyze the reverse reaction.</text>
</comment>
<comment type="catalytic activity">
    <reaction evidence="1">
        <text>acetate + ATP = acetyl phosphate + ADP</text>
        <dbReference type="Rhea" id="RHEA:11352"/>
        <dbReference type="ChEBI" id="CHEBI:22191"/>
        <dbReference type="ChEBI" id="CHEBI:30089"/>
        <dbReference type="ChEBI" id="CHEBI:30616"/>
        <dbReference type="ChEBI" id="CHEBI:456216"/>
        <dbReference type="EC" id="2.7.2.1"/>
    </reaction>
</comment>
<comment type="cofactor">
    <cofactor evidence="1">
        <name>Mg(2+)</name>
        <dbReference type="ChEBI" id="CHEBI:18420"/>
    </cofactor>
    <cofactor evidence="1">
        <name>Mn(2+)</name>
        <dbReference type="ChEBI" id="CHEBI:29035"/>
    </cofactor>
    <text evidence="1">Mg(2+). Can also accept Mn(2+).</text>
</comment>
<comment type="pathway">
    <text evidence="1">Metabolic intermediate biosynthesis; acetyl-CoA biosynthesis; acetyl-CoA from acetate: step 1/2.</text>
</comment>
<comment type="subunit">
    <text evidence="1">Homodimer.</text>
</comment>
<comment type="subcellular location">
    <subcellularLocation>
        <location evidence="1">Cytoplasm</location>
    </subcellularLocation>
</comment>
<comment type="similarity">
    <text evidence="1">Belongs to the acetokinase family.</text>
</comment>
<accession>B2GB54</accession>
<feature type="chain" id="PRO_1000089981" description="Acetate kinase">
    <location>
        <begin position="1"/>
        <end position="398"/>
    </location>
</feature>
<feature type="active site" description="Proton donor/acceptor" evidence="1">
    <location>
        <position position="147"/>
    </location>
</feature>
<feature type="binding site" evidence="1">
    <location>
        <position position="8"/>
    </location>
    <ligand>
        <name>Mg(2+)</name>
        <dbReference type="ChEBI" id="CHEBI:18420"/>
    </ligand>
</feature>
<feature type="binding site" evidence="1">
    <location>
        <position position="15"/>
    </location>
    <ligand>
        <name>ATP</name>
        <dbReference type="ChEBI" id="CHEBI:30616"/>
    </ligand>
</feature>
<feature type="binding site" evidence="1">
    <location>
        <position position="90"/>
    </location>
    <ligand>
        <name>substrate</name>
    </ligand>
</feature>
<feature type="binding site" evidence="1">
    <location>
        <begin position="207"/>
        <end position="211"/>
    </location>
    <ligand>
        <name>ATP</name>
        <dbReference type="ChEBI" id="CHEBI:30616"/>
    </ligand>
</feature>
<feature type="binding site" evidence="1">
    <location>
        <begin position="282"/>
        <end position="284"/>
    </location>
    <ligand>
        <name>ATP</name>
        <dbReference type="ChEBI" id="CHEBI:30616"/>
    </ligand>
</feature>
<feature type="binding site" evidence="1">
    <location>
        <begin position="330"/>
        <end position="334"/>
    </location>
    <ligand>
        <name>ATP</name>
        <dbReference type="ChEBI" id="CHEBI:30616"/>
    </ligand>
</feature>
<feature type="binding site" evidence="1">
    <location>
        <position position="383"/>
    </location>
    <ligand>
        <name>Mg(2+)</name>
        <dbReference type="ChEBI" id="CHEBI:18420"/>
    </ligand>
</feature>
<feature type="site" description="Transition state stabilizer" evidence="1">
    <location>
        <position position="179"/>
    </location>
</feature>
<feature type="site" description="Transition state stabilizer" evidence="1">
    <location>
        <position position="240"/>
    </location>
</feature>
<gene>
    <name evidence="1" type="primary">ackA</name>
    <name type="ordered locus">LAF_0550</name>
</gene>
<proteinExistence type="inferred from homology"/>
<dbReference type="EC" id="2.7.2.1" evidence="1"/>
<dbReference type="EMBL" id="AP008937">
    <property type="protein sequence ID" value="BAG26886.1"/>
    <property type="molecule type" value="Genomic_DNA"/>
</dbReference>
<dbReference type="RefSeq" id="WP_003686075.1">
    <property type="nucleotide sequence ID" value="NC_010610.1"/>
</dbReference>
<dbReference type="SMR" id="B2GB54"/>
<dbReference type="KEGG" id="lfe:LAF_0550"/>
<dbReference type="eggNOG" id="COG0282">
    <property type="taxonomic scope" value="Bacteria"/>
</dbReference>
<dbReference type="HOGENOM" id="CLU_020352_0_1_9"/>
<dbReference type="UniPathway" id="UPA00340">
    <property type="reaction ID" value="UER00458"/>
</dbReference>
<dbReference type="Proteomes" id="UP000001697">
    <property type="component" value="Chromosome"/>
</dbReference>
<dbReference type="GO" id="GO:0005737">
    <property type="term" value="C:cytoplasm"/>
    <property type="evidence" value="ECO:0007669"/>
    <property type="project" value="UniProtKB-SubCell"/>
</dbReference>
<dbReference type="GO" id="GO:0008776">
    <property type="term" value="F:acetate kinase activity"/>
    <property type="evidence" value="ECO:0007669"/>
    <property type="project" value="UniProtKB-UniRule"/>
</dbReference>
<dbReference type="GO" id="GO:0005524">
    <property type="term" value="F:ATP binding"/>
    <property type="evidence" value="ECO:0007669"/>
    <property type="project" value="UniProtKB-KW"/>
</dbReference>
<dbReference type="GO" id="GO:0000287">
    <property type="term" value="F:magnesium ion binding"/>
    <property type="evidence" value="ECO:0007669"/>
    <property type="project" value="UniProtKB-UniRule"/>
</dbReference>
<dbReference type="GO" id="GO:0006083">
    <property type="term" value="P:acetate metabolic process"/>
    <property type="evidence" value="ECO:0007669"/>
    <property type="project" value="TreeGrafter"/>
</dbReference>
<dbReference type="GO" id="GO:0006085">
    <property type="term" value="P:acetyl-CoA biosynthetic process"/>
    <property type="evidence" value="ECO:0007669"/>
    <property type="project" value="UniProtKB-UniRule"/>
</dbReference>
<dbReference type="CDD" id="cd24010">
    <property type="entry name" value="ASKHA_NBD_AcK_PK"/>
    <property type="match status" value="1"/>
</dbReference>
<dbReference type="Gene3D" id="3.30.420.40">
    <property type="match status" value="2"/>
</dbReference>
<dbReference type="HAMAP" id="MF_00020">
    <property type="entry name" value="Acetate_kinase"/>
    <property type="match status" value="1"/>
</dbReference>
<dbReference type="InterPro" id="IPR004372">
    <property type="entry name" value="Ac/propionate_kinase"/>
</dbReference>
<dbReference type="InterPro" id="IPR000890">
    <property type="entry name" value="Aliphatic_acid_kin_short-chain"/>
</dbReference>
<dbReference type="InterPro" id="IPR023865">
    <property type="entry name" value="Aliphatic_acid_kinase_CS"/>
</dbReference>
<dbReference type="InterPro" id="IPR043129">
    <property type="entry name" value="ATPase_NBD"/>
</dbReference>
<dbReference type="NCBIfam" id="TIGR00016">
    <property type="entry name" value="ackA"/>
    <property type="match status" value="1"/>
</dbReference>
<dbReference type="PANTHER" id="PTHR21060">
    <property type="entry name" value="ACETATE KINASE"/>
    <property type="match status" value="1"/>
</dbReference>
<dbReference type="PANTHER" id="PTHR21060:SF15">
    <property type="entry name" value="ACETATE KINASE-RELATED"/>
    <property type="match status" value="1"/>
</dbReference>
<dbReference type="Pfam" id="PF00871">
    <property type="entry name" value="Acetate_kinase"/>
    <property type="match status" value="1"/>
</dbReference>
<dbReference type="PIRSF" id="PIRSF000722">
    <property type="entry name" value="Acetate_prop_kin"/>
    <property type="match status" value="1"/>
</dbReference>
<dbReference type="PRINTS" id="PR00471">
    <property type="entry name" value="ACETATEKNASE"/>
</dbReference>
<dbReference type="SUPFAM" id="SSF53067">
    <property type="entry name" value="Actin-like ATPase domain"/>
    <property type="match status" value="2"/>
</dbReference>
<dbReference type="PROSITE" id="PS01075">
    <property type="entry name" value="ACETATE_KINASE_1"/>
    <property type="match status" value="1"/>
</dbReference>
<dbReference type="PROSITE" id="PS01076">
    <property type="entry name" value="ACETATE_KINASE_2"/>
    <property type="match status" value="1"/>
</dbReference>
<organism>
    <name type="scientific">Limosilactobacillus fermentum (strain NBRC 3956 / LMG 18251)</name>
    <name type="common">Lactobacillus fermentum</name>
    <dbReference type="NCBI Taxonomy" id="334390"/>
    <lineage>
        <taxon>Bacteria</taxon>
        <taxon>Bacillati</taxon>
        <taxon>Bacillota</taxon>
        <taxon>Bacilli</taxon>
        <taxon>Lactobacillales</taxon>
        <taxon>Lactobacillaceae</taxon>
        <taxon>Limosilactobacillus</taxon>
    </lineage>
</organism>
<protein>
    <recommendedName>
        <fullName evidence="1">Acetate kinase</fullName>
        <ecNumber evidence="1">2.7.2.1</ecNumber>
    </recommendedName>
    <alternativeName>
        <fullName evidence="1">Acetokinase</fullName>
    </alternativeName>
</protein>
<sequence length="398" mass="43551">MSKTIAVNAGSSTVKFKLFDMPSEEVVAEGNIERIGMDMGHAKIKYGDGQVSEEEKPFPNHGTAVSYLLDQLINLGIVKEYHEITAVGHRIVAGGEFFKDSVVIDDDVMQKIDELAEYAPLHNPAELQGIKAFKRVLPDAFAVAVFDTSFHSNMPEMNALYSVPYEWYEKYGARKYGAHGTSHRYVASRAAEMLGKPLEDLKLITCHIGAGASITAIKNGKSFDTSMGFSPLAGVTMATRSGDVDPSLVAFVQSKLGISSEEMIELLNHKSGLLGLSELSADMRDVQAAAEHGNKQCELALEIYENRVLKYIGSYLAELGGADAIVFTAGVGENDKEFRQAIGDKLAYFGVKVDPEKNDVRGEERDVSADDAKIKVLLIPTNEELMIVHDIERLRKQA</sequence>
<evidence type="ECO:0000255" key="1">
    <source>
        <dbReference type="HAMAP-Rule" id="MF_00020"/>
    </source>
</evidence>
<name>ACKA_LIMF3</name>
<keyword id="KW-0067">ATP-binding</keyword>
<keyword id="KW-0963">Cytoplasm</keyword>
<keyword id="KW-0418">Kinase</keyword>
<keyword id="KW-0460">Magnesium</keyword>
<keyword id="KW-0479">Metal-binding</keyword>
<keyword id="KW-0547">Nucleotide-binding</keyword>
<keyword id="KW-1185">Reference proteome</keyword>
<keyword id="KW-0808">Transferase</keyword>
<reference key="1">
    <citation type="journal article" date="2008" name="DNA Res.">
        <title>Comparative genome analysis of Lactobacillus reuteri and Lactobacillus fermentum reveal a genomic island for reuterin and cobalamin production.</title>
        <authorList>
            <person name="Morita H."/>
            <person name="Toh H."/>
            <person name="Fukuda S."/>
            <person name="Horikawa H."/>
            <person name="Oshima K."/>
            <person name="Suzuki T."/>
            <person name="Murakami M."/>
            <person name="Hisamatsu S."/>
            <person name="Kato Y."/>
            <person name="Takizawa T."/>
            <person name="Fukuoka H."/>
            <person name="Yoshimura T."/>
            <person name="Itoh K."/>
            <person name="O'Sullivan D.J."/>
            <person name="McKay L.L."/>
            <person name="Ohno H."/>
            <person name="Kikuchi J."/>
            <person name="Masaoka T."/>
            <person name="Hattori M."/>
        </authorList>
    </citation>
    <scope>NUCLEOTIDE SEQUENCE [LARGE SCALE GENOMIC DNA]</scope>
    <source>
        <strain>NBRC 3956 / LMG 18251</strain>
    </source>
</reference>